<protein>
    <recommendedName>
        <fullName evidence="1">PKHD-type hydroxylase Bcep18194_B0892</fullName>
        <ecNumber evidence="1">1.14.11.-</ecNumber>
    </recommendedName>
</protein>
<feature type="chain" id="PRO_0000346472" description="PKHD-type hydroxylase Bcep18194_B0892">
    <location>
        <begin position="1"/>
        <end position="227"/>
    </location>
</feature>
<feature type="domain" description="Fe2OG dioxygenase" evidence="1">
    <location>
        <begin position="78"/>
        <end position="178"/>
    </location>
</feature>
<feature type="binding site" evidence="1">
    <location>
        <position position="96"/>
    </location>
    <ligand>
        <name>Fe cation</name>
        <dbReference type="ChEBI" id="CHEBI:24875"/>
    </ligand>
</feature>
<feature type="binding site" evidence="1">
    <location>
        <position position="98"/>
    </location>
    <ligand>
        <name>Fe cation</name>
        <dbReference type="ChEBI" id="CHEBI:24875"/>
    </ligand>
</feature>
<feature type="binding site" evidence="1">
    <location>
        <position position="159"/>
    </location>
    <ligand>
        <name>Fe cation</name>
        <dbReference type="ChEBI" id="CHEBI:24875"/>
    </ligand>
</feature>
<feature type="binding site" evidence="1">
    <location>
        <position position="169"/>
    </location>
    <ligand>
        <name>2-oxoglutarate</name>
        <dbReference type="ChEBI" id="CHEBI:16810"/>
    </ligand>
</feature>
<accession>Q398V5</accession>
<proteinExistence type="inferred from homology"/>
<dbReference type="EC" id="1.14.11.-" evidence="1"/>
<dbReference type="EMBL" id="CP000152">
    <property type="protein sequence ID" value="ABB11006.1"/>
    <property type="molecule type" value="Genomic_DNA"/>
</dbReference>
<dbReference type="RefSeq" id="WP_011354499.1">
    <property type="nucleotide sequence ID" value="NC_007511.1"/>
</dbReference>
<dbReference type="SMR" id="Q398V5"/>
<dbReference type="GeneID" id="45097248"/>
<dbReference type="KEGG" id="bur:Bcep18194_B0892"/>
<dbReference type="PATRIC" id="fig|482957.22.peg.4524"/>
<dbReference type="HOGENOM" id="CLU_106663_0_0_4"/>
<dbReference type="Proteomes" id="UP000002705">
    <property type="component" value="Chromosome 2"/>
</dbReference>
<dbReference type="GO" id="GO:0016706">
    <property type="term" value="F:2-oxoglutarate-dependent dioxygenase activity"/>
    <property type="evidence" value="ECO:0007669"/>
    <property type="project" value="UniProtKB-UniRule"/>
</dbReference>
<dbReference type="GO" id="GO:0005506">
    <property type="term" value="F:iron ion binding"/>
    <property type="evidence" value="ECO:0007669"/>
    <property type="project" value="UniProtKB-UniRule"/>
</dbReference>
<dbReference type="GO" id="GO:0031418">
    <property type="term" value="F:L-ascorbic acid binding"/>
    <property type="evidence" value="ECO:0007669"/>
    <property type="project" value="UniProtKB-KW"/>
</dbReference>
<dbReference type="GO" id="GO:0006974">
    <property type="term" value="P:DNA damage response"/>
    <property type="evidence" value="ECO:0007669"/>
    <property type="project" value="TreeGrafter"/>
</dbReference>
<dbReference type="GO" id="GO:0006879">
    <property type="term" value="P:intracellular iron ion homeostasis"/>
    <property type="evidence" value="ECO:0007669"/>
    <property type="project" value="TreeGrafter"/>
</dbReference>
<dbReference type="Gene3D" id="2.60.120.620">
    <property type="entry name" value="q2cbj1_9rhob like domain"/>
    <property type="match status" value="1"/>
</dbReference>
<dbReference type="Gene3D" id="4.10.860.20">
    <property type="entry name" value="Rabenosyn, Rab binding domain"/>
    <property type="match status" value="1"/>
</dbReference>
<dbReference type="HAMAP" id="MF_00657">
    <property type="entry name" value="Hydroxyl_YbiX"/>
    <property type="match status" value="1"/>
</dbReference>
<dbReference type="InterPro" id="IPR005123">
    <property type="entry name" value="Oxoglu/Fe-dep_dioxygenase_dom"/>
</dbReference>
<dbReference type="InterPro" id="IPR041097">
    <property type="entry name" value="PKHD_C"/>
</dbReference>
<dbReference type="InterPro" id="IPR023550">
    <property type="entry name" value="PKHD_hydroxylase"/>
</dbReference>
<dbReference type="InterPro" id="IPR006620">
    <property type="entry name" value="Pro_4_hyd_alph"/>
</dbReference>
<dbReference type="InterPro" id="IPR044862">
    <property type="entry name" value="Pro_4_hyd_alph_FE2OG_OXY"/>
</dbReference>
<dbReference type="NCBIfam" id="NF003973">
    <property type="entry name" value="PRK05467.1-2"/>
    <property type="match status" value="1"/>
</dbReference>
<dbReference type="NCBIfam" id="NF003974">
    <property type="entry name" value="PRK05467.1-3"/>
    <property type="match status" value="1"/>
</dbReference>
<dbReference type="NCBIfam" id="NF003975">
    <property type="entry name" value="PRK05467.1-4"/>
    <property type="match status" value="1"/>
</dbReference>
<dbReference type="PANTHER" id="PTHR41536">
    <property type="entry name" value="PKHD-TYPE HYDROXYLASE YBIX"/>
    <property type="match status" value="1"/>
</dbReference>
<dbReference type="PANTHER" id="PTHR41536:SF1">
    <property type="entry name" value="PKHD-TYPE HYDROXYLASE YBIX"/>
    <property type="match status" value="1"/>
</dbReference>
<dbReference type="Pfam" id="PF13640">
    <property type="entry name" value="2OG-FeII_Oxy_3"/>
    <property type="match status" value="1"/>
</dbReference>
<dbReference type="Pfam" id="PF18331">
    <property type="entry name" value="PKHD_C"/>
    <property type="match status" value="1"/>
</dbReference>
<dbReference type="SMART" id="SM00702">
    <property type="entry name" value="P4Hc"/>
    <property type="match status" value="1"/>
</dbReference>
<dbReference type="SUPFAM" id="SSF51197">
    <property type="entry name" value="Clavaminate synthase-like"/>
    <property type="match status" value="1"/>
</dbReference>
<dbReference type="PROSITE" id="PS51471">
    <property type="entry name" value="FE2OG_OXY"/>
    <property type="match status" value="1"/>
</dbReference>
<sequence>MMLHIPGVLTKAQVAQCRELLDAAEWIDGNATSGTQSAQAKRNRQLPEGAPAARAVGDAIQDALARHPLFFSAALPLKVFPPLFNRYEGGETFGTHVDNAIRLLRGTDFRVRSDLSATLFLEEPDAYDGGELCVEDTYGTHRAKLPAGDLVLYPASSLHHVTPVTRGERVASFFWIQSMVRDDGDRTLLFQLDTQIQALSAEKGAKDPMVISLTGIYHNLLRKWADA</sequence>
<name>Y892_BURL3</name>
<evidence type="ECO:0000255" key="1">
    <source>
        <dbReference type="HAMAP-Rule" id="MF_00657"/>
    </source>
</evidence>
<reference key="1">
    <citation type="submission" date="2005-10" db="EMBL/GenBank/DDBJ databases">
        <title>Complete sequence of chromosome 2 of Burkholderia sp. 383.</title>
        <authorList>
            <consortium name="US DOE Joint Genome Institute"/>
            <person name="Copeland A."/>
            <person name="Lucas S."/>
            <person name="Lapidus A."/>
            <person name="Barry K."/>
            <person name="Detter J.C."/>
            <person name="Glavina T."/>
            <person name="Hammon N."/>
            <person name="Israni S."/>
            <person name="Pitluck S."/>
            <person name="Chain P."/>
            <person name="Malfatti S."/>
            <person name="Shin M."/>
            <person name="Vergez L."/>
            <person name="Schmutz J."/>
            <person name="Larimer F."/>
            <person name="Land M."/>
            <person name="Kyrpides N."/>
            <person name="Lykidis A."/>
            <person name="Richardson P."/>
        </authorList>
    </citation>
    <scope>NUCLEOTIDE SEQUENCE [LARGE SCALE GENOMIC DNA]</scope>
    <source>
        <strain>ATCC 17760 / DSM 23089 / LMG 22485 / NCIMB 9086 / R18194 / 383</strain>
    </source>
</reference>
<gene>
    <name type="ordered locus">Bcep18194_B0892</name>
</gene>
<organism>
    <name type="scientific">Burkholderia lata (strain ATCC 17760 / DSM 23089 / LMG 22485 / NCIMB 9086 / R18194 / 383)</name>
    <dbReference type="NCBI Taxonomy" id="482957"/>
    <lineage>
        <taxon>Bacteria</taxon>
        <taxon>Pseudomonadati</taxon>
        <taxon>Pseudomonadota</taxon>
        <taxon>Betaproteobacteria</taxon>
        <taxon>Burkholderiales</taxon>
        <taxon>Burkholderiaceae</taxon>
        <taxon>Burkholderia</taxon>
        <taxon>Burkholderia cepacia complex</taxon>
    </lineage>
</organism>
<keyword id="KW-0223">Dioxygenase</keyword>
<keyword id="KW-0408">Iron</keyword>
<keyword id="KW-0479">Metal-binding</keyword>
<keyword id="KW-0560">Oxidoreductase</keyword>
<keyword id="KW-0847">Vitamin C</keyword>
<comment type="cofactor">
    <cofactor evidence="1">
        <name>Fe(2+)</name>
        <dbReference type="ChEBI" id="CHEBI:29033"/>
    </cofactor>
    <text evidence="1">Binds 1 Fe(2+) ion per subunit.</text>
</comment>
<comment type="cofactor">
    <cofactor evidence="1">
        <name>L-ascorbate</name>
        <dbReference type="ChEBI" id="CHEBI:38290"/>
    </cofactor>
</comment>